<dbReference type="EMBL" id="CP000115">
    <property type="protein sequence ID" value="ABA06321.1"/>
    <property type="molecule type" value="Genomic_DNA"/>
</dbReference>
<dbReference type="RefSeq" id="WP_011316237.1">
    <property type="nucleotide sequence ID" value="NC_007406.1"/>
</dbReference>
<dbReference type="SMR" id="Q3SN20"/>
<dbReference type="STRING" id="323098.Nwi_3073"/>
<dbReference type="KEGG" id="nwi:Nwi_3073"/>
<dbReference type="eggNOG" id="COG0218">
    <property type="taxonomic scope" value="Bacteria"/>
</dbReference>
<dbReference type="HOGENOM" id="CLU_033732_2_0_5"/>
<dbReference type="OrthoDB" id="9804921at2"/>
<dbReference type="Proteomes" id="UP000002531">
    <property type="component" value="Chromosome"/>
</dbReference>
<dbReference type="GO" id="GO:0005829">
    <property type="term" value="C:cytosol"/>
    <property type="evidence" value="ECO:0007669"/>
    <property type="project" value="TreeGrafter"/>
</dbReference>
<dbReference type="GO" id="GO:0005525">
    <property type="term" value="F:GTP binding"/>
    <property type="evidence" value="ECO:0007669"/>
    <property type="project" value="UniProtKB-UniRule"/>
</dbReference>
<dbReference type="GO" id="GO:0046872">
    <property type="term" value="F:metal ion binding"/>
    <property type="evidence" value="ECO:0007669"/>
    <property type="project" value="UniProtKB-KW"/>
</dbReference>
<dbReference type="GO" id="GO:0000917">
    <property type="term" value="P:division septum assembly"/>
    <property type="evidence" value="ECO:0007669"/>
    <property type="project" value="UniProtKB-KW"/>
</dbReference>
<dbReference type="CDD" id="cd01876">
    <property type="entry name" value="YihA_EngB"/>
    <property type="match status" value="1"/>
</dbReference>
<dbReference type="Gene3D" id="3.40.50.300">
    <property type="entry name" value="P-loop containing nucleotide triphosphate hydrolases"/>
    <property type="match status" value="1"/>
</dbReference>
<dbReference type="HAMAP" id="MF_00321">
    <property type="entry name" value="GTPase_EngB"/>
    <property type="match status" value="1"/>
</dbReference>
<dbReference type="InterPro" id="IPR030393">
    <property type="entry name" value="G_ENGB_dom"/>
</dbReference>
<dbReference type="InterPro" id="IPR006073">
    <property type="entry name" value="GTP-bd"/>
</dbReference>
<dbReference type="InterPro" id="IPR019987">
    <property type="entry name" value="GTP-bd_ribosome_bio_YsxC"/>
</dbReference>
<dbReference type="InterPro" id="IPR027417">
    <property type="entry name" value="P-loop_NTPase"/>
</dbReference>
<dbReference type="NCBIfam" id="TIGR03598">
    <property type="entry name" value="GTPase_YsxC"/>
    <property type="match status" value="1"/>
</dbReference>
<dbReference type="PANTHER" id="PTHR11649:SF13">
    <property type="entry name" value="ENGB-TYPE G DOMAIN-CONTAINING PROTEIN"/>
    <property type="match status" value="1"/>
</dbReference>
<dbReference type="PANTHER" id="PTHR11649">
    <property type="entry name" value="MSS1/TRME-RELATED GTP-BINDING PROTEIN"/>
    <property type="match status" value="1"/>
</dbReference>
<dbReference type="Pfam" id="PF01926">
    <property type="entry name" value="MMR_HSR1"/>
    <property type="match status" value="1"/>
</dbReference>
<dbReference type="SUPFAM" id="SSF52540">
    <property type="entry name" value="P-loop containing nucleoside triphosphate hydrolases"/>
    <property type="match status" value="1"/>
</dbReference>
<dbReference type="PROSITE" id="PS51706">
    <property type="entry name" value="G_ENGB"/>
    <property type="match status" value="1"/>
</dbReference>
<name>ENGB_NITWN</name>
<evidence type="ECO:0000255" key="1">
    <source>
        <dbReference type="HAMAP-Rule" id="MF_00321"/>
    </source>
</evidence>
<sequence>MTTGLDAELIEQGRKLFAGEWQFIWASPSIETLPPMSGLEVAFAGRSNVGKSSLINALTGRSALARTSRTPGRTQELIFFEGPKGVDVRLVDMPGYGFASAPKARIASWTSLIHQFLLGRATLARVYVLIDARHGIKDIDKTVLGALDRSAVSYQVVLTKADEVKVTEMAERIDITRTQLASHPAAFPDVLVTSSRTGNGIPELRAAMARLIGDHRR</sequence>
<comment type="function">
    <text evidence="1">Necessary for normal cell division and for the maintenance of normal septation.</text>
</comment>
<comment type="cofactor">
    <cofactor evidence="1">
        <name>Mg(2+)</name>
        <dbReference type="ChEBI" id="CHEBI:18420"/>
    </cofactor>
</comment>
<comment type="similarity">
    <text evidence="1">Belongs to the TRAFAC class TrmE-Era-EngA-EngB-Septin-like GTPase superfamily. EngB GTPase family.</text>
</comment>
<organism>
    <name type="scientific">Nitrobacter winogradskyi (strain ATCC 25391 / DSM 10237 / CIP 104748 / NCIMB 11846 / Nb-255)</name>
    <dbReference type="NCBI Taxonomy" id="323098"/>
    <lineage>
        <taxon>Bacteria</taxon>
        <taxon>Pseudomonadati</taxon>
        <taxon>Pseudomonadota</taxon>
        <taxon>Alphaproteobacteria</taxon>
        <taxon>Hyphomicrobiales</taxon>
        <taxon>Nitrobacteraceae</taxon>
        <taxon>Nitrobacter</taxon>
    </lineage>
</organism>
<reference key="1">
    <citation type="journal article" date="2006" name="Appl. Environ. Microbiol.">
        <title>Genome sequence of the chemolithoautotrophic nitrite-oxidizing bacterium Nitrobacter winogradskyi Nb-255.</title>
        <authorList>
            <person name="Starkenburg S.R."/>
            <person name="Chain P.S.G."/>
            <person name="Sayavedra-Soto L.A."/>
            <person name="Hauser L."/>
            <person name="Land M.L."/>
            <person name="Larimer F.W."/>
            <person name="Malfatti S.A."/>
            <person name="Klotz M.G."/>
            <person name="Bottomley P.J."/>
            <person name="Arp D.J."/>
            <person name="Hickey W.J."/>
        </authorList>
    </citation>
    <scope>NUCLEOTIDE SEQUENCE [LARGE SCALE GENOMIC DNA]</scope>
    <source>
        <strain>ATCC 25391 / DSM 10237 / CIP 104748 / NCIMB 11846 / Nb-255</strain>
    </source>
</reference>
<gene>
    <name evidence="1" type="primary">engB</name>
    <name type="ordered locus">Nwi_3073</name>
</gene>
<feature type="chain" id="PRO_0000266905" description="Probable GTP-binding protein EngB">
    <location>
        <begin position="1"/>
        <end position="217"/>
    </location>
</feature>
<feature type="domain" description="EngB-type G" evidence="1">
    <location>
        <begin position="37"/>
        <end position="214"/>
    </location>
</feature>
<feature type="binding site" evidence="1">
    <location>
        <begin position="45"/>
        <end position="52"/>
    </location>
    <ligand>
        <name>GTP</name>
        <dbReference type="ChEBI" id="CHEBI:37565"/>
    </ligand>
</feature>
<feature type="binding site" evidence="1">
    <location>
        <position position="52"/>
    </location>
    <ligand>
        <name>Mg(2+)</name>
        <dbReference type="ChEBI" id="CHEBI:18420"/>
    </ligand>
</feature>
<feature type="binding site" evidence="1">
    <location>
        <begin position="72"/>
        <end position="76"/>
    </location>
    <ligand>
        <name>GTP</name>
        <dbReference type="ChEBI" id="CHEBI:37565"/>
    </ligand>
</feature>
<feature type="binding site" evidence="1">
    <location>
        <position position="74"/>
    </location>
    <ligand>
        <name>Mg(2+)</name>
        <dbReference type="ChEBI" id="CHEBI:18420"/>
    </ligand>
</feature>
<feature type="binding site" evidence="1">
    <location>
        <begin position="92"/>
        <end position="95"/>
    </location>
    <ligand>
        <name>GTP</name>
        <dbReference type="ChEBI" id="CHEBI:37565"/>
    </ligand>
</feature>
<feature type="binding site" evidence="1">
    <location>
        <begin position="159"/>
        <end position="162"/>
    </location>
    <ligand>
        <name>GTP</name>
        <dbReference type="ChEBI" id="CHEBI:37565"/>
    </ligand>
</feature>
<feature type="binding site" evidence="1">
    <location>
        <begin position="193"/>
        <end position="195"/>
    </location>
    <ligand>
        <name>GTP</name>
        <dbReference type="ChEBI" id="CHEBI:37565"/>
    </ligand>
</feature>
<accession>Q3SN20</accession>
<proteinExistence type="inferred from homology"/>
<keyword id="KW-0131">Cell cycle</keyword>
<keyword id="KW-0132">Cell division</keyword>
<keyword id="KW-0342">GTP-binding</keyword>
<keyword id="KW-0460">Magnesium</keyword>
<keyword id="KW-0479">Metal-binding</keyword>
<keyword id="KW-0547">Nucleotide-binding</keyword>
<keyword id="KW-1185">Reference proteome</keyword>
<keyword id="KW-0717">Septation</keyword>
<protein>
    <recommendedName>
        <fullName evidence="1">Probable GTP-binding protein EngB</fullName>
    </recommendedName>
</protein>